<keyword id="KW-0044">Antibiotic</keyword>
<keyword id="KW-0929">Antimicrobial</keyword>
<keyword id="KW-0165">Cleavage on pair of basic residues</keyword>
<keyword id="KW-0325">Glycoprotein</keyword>
<keyword id="KW-0391">Immunity</keyword>
<keyword id="KW-0399">Innate immunity</keyword>
<keyword id="KW-0964">Secreted</keyword>
<keyword id="KW-0732">Signal</keyword>
<protein>
    <recommendedName>
        <fullName evidence="1">Drosocin antimicrobial peptides</fullName>
    </recommendedName>
    <component>
        <recommendedName>
            <fullName evidence="1">Drosocin</fullName>
        </recommendedName>
    </component>
    <component>
        <recommendedName>
            <fullName evidence="1">Buletin</fullName>
        </recommendedName>
    </component>
</protein>
<sequence>MKFTIVFLLLACVFAMAVATPGKPRPYSPRPTSHPRPIRVRREALAIEDHLAQAAIRPPPILPA</sequence>
<accession>Q6XMH8</accession>
<dbReference type="EMBL" id="AY224618">
    <property type="protein sequence ID" value="AAO72477.1"/>
    <property type="molecule type" value="Genomic_DNA"/>
</dbReference>
<dbReference type="GlyCosmos" id="Q6XMH8">
    <property type="glycosylation" value="2 sites, No reported glycans"/>
</dbReference>
<dbReference type="OrthoDB" id="7842424at2759"/>
<dbReference type="GO" id="GO:0005576">
    <property type="term" value="C:extracellular region"/>
    <property type="evidence" value="ECO:0000250"/>
    <property type="project" value="UniProtKB"/>
</dbReference>
<dbReference type="GO" id="GO:0019731">
    <property type="term" value="P:antibacterial humoral response"/>
    <property type="evidence" value="ECO:0007669"/>
    <property type="project" value="EnsemblMetazoa"/>
</dbReference>
<dbReference type="GO" id="GO:0050829">
    <property type="term" value="P:defense response to Gram-negative bacterium"/>
    <property type="evidence" value="ECO:0000250"/>
    <property type="project" value="UniProtKB"/>
</dbReference>
<dbReference type="GO" id="GO:0050830">
    <property type="term" value="P:defense response to Gram-positive bacterium"/>
    <property type="evidence" value="ECO:0007669"/>
    <property type="project" value="EnsemblMetazoa"/>
</dbReference>
<dbReference type="GO" id="GO:0002213">
    <property type="term" value="P:defense response to insect"/>
    <property type="evidence" value="ECO:0007669"/>
    <property type="project" value="EnsemblMetazoa"/>
</dbReference>
<dbReference type="GO" id="GO:0045087">
    <property type="term" value="P:innate immune response"/>
    <property type="evidence" value="ECO:0007669"/>
    <property type="project" value="UniProtKB-KW"/>
</dbReference>
<dbReference type="GO" id="GO:0006964">
    <property type="term" value="P:positive regulation of biosynthetic process of antibacterial peptides active against Gram-negative bacteria"/>
    <property type="evidence" value="ECO:0000250"/>
    <property type="project" value="UniProtKB"/>
</dbReference>
<reference key="1">
    <citation type="journal article" date="2003" name="Mol. Biol. Evol.">
        <title>Molecular population genetics of inducible antibacterial peptide genes in Drosophila melanogaster.</title>
        <authorList>
            <person name="Lazzaro B.P."/>
            <person name="Clark A.G."/>
        </authorList>
    </citation>
    <scope>NUCLEOTIDE SEQUENCE [GENOMIC DNA]</scope>
</reference>
<comment type="function">
    <molecule>Drosocin</molecule>
    <text evidence="1">Antibacterial peptide with strong anti-Gram-negative bacteria activity. Significantly contributes to antibacterial activity against Enterobacter cloacae but not Providencia burhodogranariea. Inhibitor of bacterial translation machinery that targets translation termination in a prfA- or prfB-dependent manner. Binds within the nascent peptide exit tunnel of the bacterial large ribosomal subunit, potentially interfering with nascent chain translocation that occurs post-peptide bond formation. Binds prfA/RF1 (and potentially prfB/RF2), trapping it on the ribosome after release of the nascent polypeptide chain and preventing further translation. The resulting depletion of peptide chain release factors further disrupts bacterial translation by preventing ribosomal peptide chain release and inducing stop codon readthrough. Entry into target Escherichia coli cells requires the bacterial peptide antibiotic transporter sbmA.</text>
</comment>
<comment type="function">
    <molecule>Buletin</molecule>
    <text evidence="1">Peptide with significant antibacterial activity against Providencia burhodogranariea but not Enterobacter cloacae.</text>
</comment>
<comment type="subunit">
    <molecule>Drosocin</molecule>
    <text evidence="1">Associates with the bacterial 50S ribosomal complex, occupying the nascent peptide exit tunnel. Interacts with bacterial 23S rRNA; this interaction is direct. Interacts with bacterial rplV/50S ribosomal protein L22; this interaction is direct. Interacts with bacterial prfA/peptide chain release factor RF1; while associated with the bacterial 50S ribosomal complex, this interaction is direct and traps RF1 on the ribosome, inhibiting further translation.</text>
</comment>
<comment type="subcellular location">
    <molecule>Drosocin</molecule>
    <subcellularLocation>
        <location evidence="1">Secreted</location>
    </subcellularLocation>
</comment>
<comment type="subcellular location">
    <molecule>Buletin</molecule>
    <subcellularLocation>
        <location evidence="1">Secreted</location>
    </subcellularLocation>
</comment>
<comment type="PTM">
    <text evidence="1">Proteolytically cleaved at a pair of basic residues corresponding to the RXK/RR optimal cleavage site for furin proteases to produce two distinct antibacterial peptides.</text>
</comment>
<comment type="PTM">
    <molecule>Drosocin</molecule>
    <text evidence="1">O-glycosylated. O-glycosylation may be required for efficient uptake by target bacterial cells. Monosaccharide modification of Thr-32 provides better antibacterial activity than disaccharide modification or no modification. O-glycosylation of Thr-32 is not essential for antimicrobial activity but enhances this activity by mediating interactions with the 23S rRNA and increasing the efficiency of translation inhibition.</text>
</comment>
<comment type="miscellaneous">
    <text evidence="1">Unlike many antimicrobial peptides that kill bacteria using a lytic mechanism, proline-rich antimicrobial peptides can enter the bacterial cell to target intracellular processes.</text>
</comment>
<comment type="miscellaneous">
    <text evidence="1">'Buletin' is named after Philippe Bulet, whose dedicated efforts in the 1980s-1990s characterized many of the Drosophila antimicrobial peptides, including Drosocin.</text>
</comment>
<comment type="similarity">
    <text evidence="3">Belongs to the drosocin family.</text>
</comment>
<evidence type="ECO:0000250" key="1">
    <source>
        <dbReference type="UniProtKB" id="P36193"/>
    </source>
</evidence>
<evidence type="ECO:0000255" key="2"/>
<evidence type="ECO:0000305" key="3"/>
<gene>
    <name type="primary">Dro</name>
</gene>
<name>DROS_DROSI</name>
<proteinExistence type="inferred from homology"/>
<organism>
    <name type="scientific">Drosophila simulans</name>
    <name type="common">Fruit fly</name>
    <dbReference type="NCBI Taxonomy" id="7240"/>
    <lineage>
        <taxon>Eukaryota</taxon>
        <taxon>Metazoa</taxon>
        <taxon>Ecdysozoa</taxon>
        <taxon>Arthropoda</taxon>
        <taxon>Hexapoda</taxon>
        <taxon>Insecta</taxon>
        <taxon>Pterygota</taxon>
        <taxon>Neoptera</taxon>
        <taxon>Endopterygota</taxon>
        <taxon>Diptera</taxon>
        <taxon>Brachycera</taxon>
        <taxon>Muscomorpha</taxon>
        <taxon>Ephydroidea</taxon>
        <taxon>Drosophilidae</taxon>
        <taxon>Drosophila</taxon>
        <taxon>Sophophora</taxon>
    </lineage>
</organism>
<feature type="signal peptide" evidence="2">
    <location>
        <begin position="1"/>
        <end position="19"/>
    </location>
</feature>
<feature type="propeptide" id="PRO_0000004961" evidence="1">
    <location>
        <begin position="20"/>
        <end position="21"/>
    </location>
</feature>
<feature type="peptide" id="PRO_0000004962" description="Drosocin" evidence="1">
    <location>
        <begin position="22"/>
        <end position="40"/>
    </location>
</feature>
<feature type="peptide" id="PRO_0000458866" description="Buletin" evidence="1">
    <location>
        <begin position="43"/>
        <end position="64"/>
    </location>
</feature>
<feature type="region of interest" description="Critical for inhibition of translation, possibly due to its role in mediating interactions with bacterial 23S rRNA and peptide chain release factors" evidence="1">
    <location>
        <begin position="32"/>
        <end position="40"/>
    </location>
</feature>
<feature type="site" description="Critical for inhibition of translation, possibly due to its role in mediating the interaction with bacterial 23S rRNA" evidence="1">
    <location>
        <position position="23"/>
    </location>
</feature>
<feature type="site" description="Critical for inhibition of translation, possibly due to its role in mediating the interaction with bacterial 23S rRNA" evidence="1">
    <location>
        <position position="25"/>
    </location>
</feature>
<feature type="site" description="Critical for inhibition of translation, possibly due to its role in mediating the interaction with bacterial 23S rRNA and rplV/50S ribosomal protein L22" evidence="1">
    <location>
        <position position="30"/>
    </location>
</feature>
<feature type="glycosylation site" description="O-linked (GalNAc...) serine" evidence="1">
    <location>
        <position position="28"/>
    </location>
</feature>
<feature type="glycosylation site" description="O-linked (GalNAc...) threonine" evidence="1">
    <location>
        <position position="32"/>
    </location>
</feature>